<reference key="1">
    <citation type="journal article" date="2001" name="Nature">
        <title>Massive gene decay in the leprosy bacillus.</title>
        <authorList>
            <person name="Cole S.T."/>
            <person name="Eiglmeier K."/>
            <person name="Parkhill J."/>
            <person name="James K.D."/>
            <person name="Thomson N.R."/>
            <person name="Wheeler P.R."/>
            <person name="Honore N."/>
            <person name="Garnier T."/>
            <person name="Churcher C.M."/>
            <person name="Harris D.E."/>
            <person name="Mungall K.L."/>
            <person name="Basham D."/>
            <person name="Brown D."/>
            <person name="Chillingworth T."/>
            <person name="Connor R."/>
            <person name="Davies R.M."/>
            <person name="Devlin K."/>
            <person name="Duthoy S."/>
            <person name="Feltwell T."/>
            <person name="Fraser A."/>
            <person name="Hamlin N."/>
            <person name="Holroyd S."/>
            <person name="Hornsby T."/>
            <person name="Jagels K."/>
            <person name="Lacroix C."/>
            <person name="Maclean J."/>
            <person name="Moule S."/>
            <person name="Murphy L.D."/>
            <person name="Oliver K."/>
            <person name="Quail M.A."/>
            <person name="Rajandream M.A."/>
            <person name="Rutherford K.M."/>
            <person name="Rutter S."/>
            <person name="Seeger K."/>
            <person name="Simon S."/>
            <person name="Simmonds M."/>
            <person name="Skelton J."/>
            <person name="Squares R."/>
            <person name="Squares S."/>
            <person name="Stevens K."/>
            <person name="Taylor K."/>
            <person name="Whitehead S."/>
            <person name="Woodward J.R."/>
            <person name="Barrell B.G."/>
        </authorList>
    </citation>
    <scope>NUCLEOTIDE SEQUENCE [LARGE SCALE GENOMIC DNA]</scope>
    <source>
        <strain>TN</strain>
    </source>
</reference>
<name>GCSP_MYCLE</name>
<keyword id="KW-0560">Oxidoreductase</keyword>
<keyword id="KW-0663">Pyridoxal phosphate</keyword>
<keyword id="KW-1185">Reference proteome</keyword>
<organism>
    <name type="scientific">Mycobacterium leprae (strain TN)</name>
    <dbReference type="NCBI Taxonomy" id="272631"/>
    <lineage>
        <taxon>Bacteria</taxon>
        <taxon>Bacillati</taxon>
        <taxon>Actinomycetota</taxon>
        <taxon>Actinomycetes</taxon>
        <taxon>Mycobacteriales</taxon>
        <taxon>Mycobacteriaceae</taxon>
        <taxon>Mycobacterium</taxon>
    </lineage>
</organism>
<feature type="chain" id="PRO_0000166919" description="Glycine dehydrogenase (decarboxylating)">
    <location>
        <begin position="1"/>
        <end position="952"/>
    </location>
</feature>
<feature type="modified residue" description="N6-(pyridoxal phosphate)lysine" evidence="1">
    <location>
        <position position="703"/>
    </location>
</feature>
<dbReference type="EC" id="1.4.4.2" evidence="1"/>
<dbReference type="EMBL" id="AL008609">
    <property type="protein sequence ID" value="CAA15464.1"/>
    <property type="molecule type" value="Genomic_DNA"/>
</dbReference>
<dbReference type="EMBL" id="AL583924">
    <property type="protein sequence ID" value="CAC31027.1"/>
    <property type="molecule type" value="Genomic_DNA"/>
</dbReference>
<dbReference type="PIR" id="T44754">
    <property type="entry name" value="T44754"/>
</dbReference>
<dbReference type="RefSeq" id="NP_302381.1">
    <property type="nucleotide sequence ID" value="NC_002677.1"/>
</dbReference>
<dbReference type="RefSeq" id="WP_010908701.1">
    <property type="nucleotide sequence ID" value="NC_002677.1"/>
</dbReference>
<dbReference type="SMR" id="O32915"/>
<dbReference type="STRING" id="272631.gene:17575924"/>
<dbReference type="KEGG" id="mle:ML2072"/>
<dbReference type="PATRIC" id="fig|272631.5.peg.3900"/>
<dbReference type="Leproma" id="ML2072"/>
<dbReference type="eggNOG" id="COG0403">
    <property type="taxonomic scope" value="Bacteria"/>
</dbReference>
<dbReference type="eggNOG" id="COG1003">
    <property type="taxonomic scope" value="Bacteria"/>
</dbReference>
<dbReference type="HOGENOM" id="CLU_004620_3_2_11"/>
<dbReference type="OrthoDB" id="9801272at2"/>
<dbReference type="Proteomes" id="UP000000806">
    <property type="component" value="Chromosome"/>
</dbReference>
<dbReference type="GO" id="GO:0005829">
    <property type="term" value="C:cytosol"/>
    <property type="evidence" value="ECO:0007669"/>
    <property type="project" value="TreeGrafter"/>
</dbReference>
<dbReference type="GO" id="GO:0005960">
    <property type="term" value="C:glycine cleavage complex"/>
    <property type="evidence" value="ECO:0007669"/>
    <property type="project" value="TreeGrafter"/>
</dbReference>
<dbReference type="GO" id="GO:0016594">
    <property type="term" value="F:glycine binding"/>
    <property type="evidence" value="ECO:0007669"/>
    <property type="project" value="TreeGrafter"/>
</dbReference>
<dbReference type="GO" id="GO:0004375">
    <property type="term" value="F:glycine dehydrogenase (decarboxylating) activity"/>
    <property type="evidence" value="ECO:0007669"/>
    <property type="project" value="UniProtKB-EC"/>
</dbReference>
<dbReference type="GO" id="GO:0030170">
    <property type="term" value="F:pyridoxal phosphate binding"/>
    <property type="evidence" value="ECO:0007669"/>
    <property type="project" value="TreeGrafter"/>
</dbReference>
<dbReference type="GO" id="GO:0019464">
    <property type="term" value="P:glycine decarboxylation via glycine cleavage system"/>
    <property type="evidence" value="ECO:0007669"/>
    <property type="project" value="UniProtKB-UniRule"/>
</dbReference>
<dbReference type="CDD" id="cd00613">
    <property type="entry name" value="GDC-P"/>
    <property type="match status" value="2"/>
</dbReference>
<dbReference type="FunFam" id="3.90.1150.10:FF:000059">
    <property type="entry name" value="Glycine dehydrogenase (decarboxylating)"/>
    <property type="match status" value="1"/>
</dbReference>
<dbReference type="FunFam" id="3.40.640.10:FF:000005">
    <property type="entry name" value="Glycine dehydrogenase (decarboxylating), mitochondrial"/>
    <property type="match status" value="1"/>
</dbReference>
<dbReference type="FunFam" id="3.40.640.10:FF:000007">
    <property type="entry name" value="glycine dehydrogenase (Decarboxylating), mitochondrial"/>
    <property type="match status" value="1"/>
</dbReference>
<dbReference type="Gene3D" id="3.90.1150.10">
    <property type="entry name" value="Aspartate Aminotransferase, domain 1"/>
    <property type="match status" value="2"/>
</dbReference>
<dbReference type="Gene3D" id="3.40.640.10">
    <property type="entry name" value="Type I PLP-dependent aspartate aminotransferase-like (Major domain)"/>
    <property type="match status" value="2"/>
</dbReference>
<dbReference type="HAMAP" id="MF_00711">
    <property type="entry name" value="GcvP"/>
    <property type="match status" value="1"/>
</dbReference>
<dbReference type="InterPro" id="IPR003437">
    <property type="entry name" value="GcvP"/>
</dbReference>
<dbReference type="InterPro" id="IPR049316">
    <property type="entry name" value="GDC-P_C"/>
</dbReference>
<dbReference type="InterPro" id="IPR049315">
    <property type="entry name" value="GDC-P_N"/>
</dbReference>
<dbReference type="InterPro" id="IPR020581">
    <property type="entry name" value="GDC_P"/>
</dbReference>
<dbReference type="InterPro" id="IPR015424">
    <property type="entry name" value="PyrdxlP-dep_Trfase"/>
</dbReference>
<dbReference type="InterPro" id="IPR015421">
    <property type="entry name" value="PyrdxlP-dep_Trfase_major"/>
</dbReference>
<dbReference type="InterPro" id="IPR015422">
    <property type="entry name" value="PyrdxlP-dep_Trfase_small"/>
</dbReference>
<dbReference type="NCBIfam" id="TIGR00461">
    <property type="entry name" value="gcvP"/>
    <property type="match status" value="1"/>
</dbReference>
<dbReference type="PANTHER" id="PTHR11773:SF1">
    <property type="entry name" value="GLYCINE DEHYDROGENASE (DECARBOXYLATING), MITOCHONDRIAL"/>
    <property type="match status" value="1"/>
</dbReference>
<dbReference type="PANTHER" id="PTHR11773">
    <property type="entry name" value="GLYCINE DEHYDROGENASE, DECARBOXYLATING"/>
    <property type="match status" value="1"/>
</dbReference>
<dbReference type="Pfam" id="PF21478">
    <property type="entry name" value="GcvP2_C"/>
    <property type="match status" value="1"/>
</dbReference>
<dbReference type="Pfam" id="PF02347">
    <property type="entry name" value="GDC-P"/>
    <property type="match status" value="2"/>
</dbReference>
<dbReference type="SUPFAM" id="SSF53383">
    <property type="entry name" value="PLP-dependent transferases"/>
    <property type="match status" value="2"/>
</dbReference>
<evidence type="ECO:0000255" key="1">
    <source>
        <dbReference type="HAMAP-Rule" id="MF_00711"/>
    </source>
</evidence>
<proteinExistence type="inferred from homology"/>
<protein>
    <recommendedName>
        <fullName evidence="1">Glycine dehydrogenase (decarboxylating)</fullName>
        <ecNumber evidence="1">1.4.4.2</ecNumber>
    </recommendedName>
    <alternativeName>
        <fullName evidence="1">Glycine cleavage system P-protein</fullName>
    </alternativeName>
    <alternativeName>
        <fullName evidence="1">Glycine decarboxylase</fullName>
    </alternativeName>
    <alternativeName>
        <fullName evidence="1">Glycine dehydrogenase (aminomethyl-transferring)</fullName>
    </alternativeName>
</protein>
<sequence length="952" mass="101283">MSVPNSSNKQTCFTARHIGPNSEDVATMLAVIGVESLDDLAAKAVPSDILDNVTDTGVAPGLDRLPPPATESETLAELGALARANTVAVSMIGQGYYDTLTPAVLSRNILENPAWYTPYTPYQPEISQGRLEALLNFQTLVSDLTGLEIANASMLDEGTAAAEAMTLMYRAARSTASRVVVDVDVFAQTVAVFATRAKPLGIDIVVADLREGLPDGEFFGVITQLPGASGRITDWTALIAQAHSRGALVAVGADLLALTLITPPGEIGADVAFGTTQRFGVPMGFGGPHAGYLALHTKHARQLPGRLVGVSVDSDGTPAYRLALQTREQHIRRDKATSNICTAQVLLAVMAAMYASYHGAEGLTGIARRVHAQARALAAGLSAAGVEVVHQAFFDTVLARVPGRTVQIQGAAKERGINVWLVDGDHVSVACDEATTDEHITAVLAAFAATPARASFAGPDIATRTSAFLTHPTFTKYRTETSMMRYLRALADKDIALDRSMIPLGSCTMKLNAAAEMESITWQEFTRQHPFAPVSDTPGLRRLISDLESWLVQITGYDAVSLQPNAGSQGEYAGLLAIHDYHVSRGEPHRNVCLIPSSAHGTNAASAALVGMRVVVVGCHDNGDVDLDDLRIKLSEHANRLSVLMITYPSTHGVYEHDIAEICAAVHDAGGQVYVDGANLNALVGLARPGKFGGDVSHLNLHKTFCIPHGGGGPGVGPVAVRSHLVSFLPGHPFAPELPQGQPVSSAPYGSASLLPITWAYIRMMGADGLRTASLTAIASANYIARRLDKYFPVLYTGENGMVAHECILDLRPITKSVGVTVDDVAKRLADYGFHAPTMSFPVPGTLMVEPTESESLAEIDAFCEAMIAIRGEIARVGAGEWSVEDNPLRGAPHTAECLLASDWDHPYTREEAAYPLGKAFRPKVWPPVRRIDGVYGDRNLVCSCLPVEAFV</sequence>
<gene>
    <name evidence="1" type="primary">gcvP</name>
    <name type="synonym">gcvB</name>
    <name type="ordered locus">ML2072</name>
    <name type="ORF">MLCB1788.32c</name>
</gene>
<accession>O32915</accession>
<comment type="function">
    <text evidence="1">The glycine cleavage system catalyzes the degradation of glycine. The P protein binds the alpha-amino group of glycine through its pyridoxal phosphate cofactor; CO(2) is released and the remaining methylamine moiety is then transferred to the lipoamide cofactor of the H protein.</text>
</comment>
<comment type="catalytic activity">
    <reaction evidence="1">
        <text>N(6)-[(R)-lipoyl]-L-lysyl-[glycine-cleavage complex H protein] + glycine + H(+) = N(6)-[(R)-S(8)-aminomethyldihydrolipoyl]-L-lysyl-[glycine-cleavage complex H protein] + CO2</text>
        <dbReference type="Rhea" id="RHEA:24304"/>
        <dbReference type="Rhea" id="RHEA-COMP:10494"/>
        <dbReference type="Rhea" id="RHEA-COMP:10495"/>
        <dbReference type="ChEBI" id="CHEBI:15378"/>
        <dbReference type="ChEBI" id="CHEBI:16526"/>
        <dbReference type="ChEBI" id="CHEBI:57305"/>
        <dbReference type="ChEBI" id="CHEBI:83099"/>
        <dbReference type="ChEBI" id="CHEBI:83143"/>
        <dbReference type="EC" id="1.4.4.2"/>
    </reaction>
</comment>
<comment type="cofactor">
    <cofactor evidence="1">
        <name>pyridoxal 5'-phosphate</name>
        <dbReference type="ChEBI" id="CHEBI:597326"/>
    </cofactor>
</comment>
<comment type="subunit">
    <text evidence="1">The glycine cleavage system is composed of four proteins: P, T, L and H.</text>
</comment>
<comment type="similarity">
    <text evidence="1">Belongs to the GcvP family.</text>
</comment>